<feature type="chain" id="PRO_1000082681" description="UDP-N-acetylmuramoylalanine--D-glutamate ligase">
    <location>
        <begin position="1"/>
        <end position="442"/>
    </location>
</feature>
<feature type="binding site" evidence="1">
    <location>
        <begin position="113"/>
        <end position="119"/>
    </location>
    <ligand>
        <name>ATP</name>
        <dbReference type="ChEBI" id="CHEBI:30616"/>
    </ligand>
</feature>
<accession>A9KER6</accession>
<gene>
    <name evidence="1" type="primary">murD</name>
    <name type="ordered locus">CBUD_1975</name>
</gene>
<comment type="function">
    <text evidence="1">Cell wall formation. Catalyzes the addition of glutamate to the nucleotide precursor UDP-N-acetylmuramoyl-L-alanine (UMA).</text>
</comment>
<comment type="catalytic activity">
    <reaction evidence="1">
        <text>UDP-N-acetyl-alpha-D-muramoyl-L-alanine + D-glutamate + ATP = UDP-N-acetyl-alpha-D-muramoyl-L-alanyl-D-glutamate + ADP + phosphate + H(+)</text>
        <dbReference type="Rhea" id="RHEA:16429"/>
        <dbReference type="ChEBI" id="CHEBI:15378"/>
        <dbReference type="ChEBI" id="CHEBI:29986"/>
        <dbReference type="ChEBI" id="CHEBI:30616"/>
        <dbReference type="ChEBI" id="CHEBI:43474"/>
        <dbReference type="ChEBI" id="CHEBI:83898"/>
        <dbReference type="ChEBI" id="CHEBI:83900"/>
        <dbReference type="ChEBI" id="CHEBI:456216"/>
        <dbReference type="EC" id="6.3.2.9"/>
    </reaction>
</comment>
<comment type="pathway">
    <text evidence="1">Cell wall biogenesis; peptidoglycan biosynthesis.</text>
</comment>
<comment type="subcellular location">
    <subcellularLocation>
        <location evidence="1">Cytoplasm</location>
    </subcellularLocation>
</comment>
<comment type="similarity">
    <text evidence="1">Belongs to the MurCDEF family.</text>
</comment>
<protein>
    <recommendedName>
        <fullName evidence="1">UDP-N-acetylmuramoylalanine--D-glutamate ligase</fullName>
        <ecNumber evidence="1">6.3.2.9</ecNumber>
    </recommendedName>
    <alternativeName>
        <fullName evidence="1">D-glutamic acid-adding enzyme</fullName>
    </alternativeName>
    <alternativeName>
        <fullName evidence="1">UDP-N-acetylmuramoyl-L-alanyl-D-glutamate synthetase</fullName>
    </alternativeName>
</protein>
<sequence length="442" mass="48801">MSSESLTVIVGLGKTGLSCAQFLAAKNRPFAVMDSREEPPEWENFIKTYPRVELIRGQFSEKLLNEAQEIILSPGVSLQEPLIAKQAAQGKSIIGDIELFARNVNKPIIAITGSNGKTTVTTVVGLMMKAAGRNVSVCGNIGEPVLEQITPEPDYYVLELSSFQLETTFSLRSQAATILNISEDHMNRYATLQDYLRAKQRIYTDCFIPIVNADEPEIWRHLPFNKKPLSFGLNNAADFSLAEHNQKTSIAYQGKILMPIQELKLNARHHLQNALAALALGTAAKIPIENMLHVLRDFSGIRHRCQWVRKYKEIDYYNDSKGTNVGATRAAIESLGQAAKGQLILIAGGQGKGADFSPLKDVVKRYVKQVILIGEDAPLLEKTLKEITVIKHADSMNEAVKRSTQAAKAGDIVLLSPACASFDMFTNYEHRGDVFTETVEAL</sequence>
<name>MURD_COXBN</name>
<proteinExistence type="inferred from homology"/>
<reference key="1">
    <citation type="journal article" date="2009" name="Infect. Immun.">
        <title>Comparative genomics reveal extensive transposon-mediated genomic plasticity and diversity among potential effector proteins within the genus Coxiella.</title>
        <authorList>
            <person name="Beare P.A."/>
            <person name="Unsworth N."/>
            <person name="Andoh M."/>
            <person name="Voth D.E."/>
            <person name="Omsland A."/>
            <person name="Gilk S.D."/>
            <person name="Williams K.P."/>
            <person name="Sobral B.W."/>
            <person name="Kupko J.J. III"/>
            <person name="Porcella S.F."/>
            <person name="Samuel J.E."/>
            <person name="Heinzen R.A."/>
        </authorList>
    </citation>
    <scope>NUCLEOTIDE SEQUENCE [LARGE SCALE GENOMIC DNA]</scope>
    <source>
        <strain>Dugway 5J108-111</strain>
    </source>
</reference>
<organism>
    <name type="scientific">Coxiella burnetii (strain Dugway 5J108-111)</name>
    <dbReference type="NCBI Taxonomy" id="434922"/>
    <lineage>
        <taxon>Bacteria</taxon>
        <taxon>Pseudomonadati</taxon>
        <taxon>Pseudomonadota</taxon>
        <taxon>Gammaproteobacteria</taxon>
        <taxon>Legionellales</taxon>
        <taxon>Coxiellaceae</taxon>
        <taxon>Coxiella</taxon>
    </lineage>
</organism>
<dbReference type="EC" id="6.3.2.9" evidence="1"/>
<dbReference type="EMBL" id="CP000733">
    <property type="protein sequence ID" value="ABS77067.1"/>
    <property type="molecule type" value="Genomic_DNA"/>
</dbReference>
<dbReference type="RefSeq" id="WP_011997358.1">
    <property type="nucleotide sequence ID" value="NC_009727.1"/>
</dbReference>
<dbReference type="SMR" id="A9KER6"/>
<dbReference type="KEGG" id="cbd:CBUD_1975"/>
<dbReference type="HOGENOM" id="CLU_032540_1_0_6"/>
<dbReference type="UniPathway" id="UPA00219"/>
<dbReference type="Proteomes" id="UP000008555">
    <property type="component" value="Chromosome"/>
</dbReference>
<dbReference type="GO" id="GO:0005737">
    <property type="term" value="C:cytoplasm"/>
    <property type="evidence" value="ECO:0007669"/>
    <property type="project" value="UniProtKB-SubCell"/>
</dbReference>
<dbReference type="GO" id="GO:0005524">
    <property type="term" value="F:ATP binding"/>
    <property type="evidence" value="ECO:0007669"/>
    <property type="project" value="UniProtKB-UniRule"/>
</dbReference>
<dbReference type="GO" id="GO:0008764">
    <property type="term" value="F:UDP-N-acetylmuramoylalanine-D-glutamate ligase activity"/>
    <property type="evidence" value="ECO:0007669"/>
    <property type="project" value="UniProtKB-UniRule"/>
</dbReference>
<dbReference type="GO" id="GO:0051301">
    <property type="term" value="P:cell division"/>
    <property type="evidence" value="ECO:0007669"/>
    <property type="project" value="UniProtKB-KW"/>
</dbReference>
<dbReference type="GO" id="GO:0071555">
    <property type="term" value="P:cell wall organization"/>
    <property type="evidence" value="ECO:0007669"/>
    <property type="project" value="UniProtKB-KW"/>
</dbReference>
<dbReference type="GO" id="GO:0009252">
    <property type="term" value="P:peptidoglycan biosynthetic process"/>
    <property type="evidence" value="ECO:0007669"/>
    <property type="project" value="UniProtKB-UniRule"/>
</dbReference>
<dbReference type="GO" id="GO:0008360">
    <property type="term" value="P:regulation of cell shape"/>
    <property type="evidence" value="ECO:0007669"/>
    <property type="project" value="UniProtKB-KW"/>
</dbReference>
<dbReference type="Gene3D" id="3.90.190.20">
    <property type="entry name" value="Mur ligase, C-terminal domain"/>
    <property type="match status" value="1"/>
</dbReference>
<dbReference type="Gene3D" id="3.40.1190.10">
    <property type="entry name" value="Mur-like, catalytic domain"/>
    <property type="match status" value="1"/>
</dbReference>
<dbReference type="Gene3D" id="3.40.50.720">
    <property type="entry name" value="NAD(P)-binding Rossmann-like Domain"/>
    <property type="match status" value="1"/>
</dbReference>
<dbReference type="HAMAP" id="MF_00639">
    <property type="entry name" value="MurD"/>
    <property type="match status" value="1"/>
</dbReference>
<dbReference type="InterPro" id="IPR036565">
    <property type="entry name" value="Mur-like_cat_sf"/>
</dbReference>
<dbReference type="InterPro" id="IPR004101">
    <property type="entry name" value="Mur_ligase_C"/>
</dbReference>
<dbReference type="InterPro" id="IPR036615">
    <property type="entry name" value="Mur_ligase_C_dom_sf"/>
</dbReference>
<dbReference type="InterPro" id="IPR013221">
    <property type="entry name" value="Mur_ligase_cen"/>
</dbReference>
<dbReference type="InterPro" id="IPR005762">
    <property type="entry name" value="MurD"/>
</dbReference>
<dbReference type="NCBIfam" id="TIGR01087">
    <property type="entry name" value="murD"/>
    <property type="match status" value="1"/>
</dbReference>
<dbReference type="PANTHER" id="PTHR43692">
    <property type="entry name" value="UDP-N-ACETYLMURAMOYLALANINE--D-GLUTAMATE LIGASE"/>
    <property type="match status" value="1"/>
</dbReference>
<dbReference type="PANTHER" id="PTHR43692:SF1">
    <property type="entry name" value="UDP-N-ACETYLMURAMOYLALANINE--D-GLUTAMATE LIGASE"/>
    <property type="match status" value="1"/>
</dbReference>
<dbReference type="Pfam" id="PF02875">
    <property type="entry name" value="Mur_ligase_C"/>
    <property type="match status" value="1"/>
</dbReference>
<dbReference type="Pfam" id="PF08245">
    <property type="entry name" value="Mur_ligase_M"/>
    <property type="match status" value="1"/>
</dbReference>
<dbReference type="Pfam" id="PF21799">
    <property type="entry name" value="MurD-like_N"/>
    <property type="match status" value="1"/>
</dbReference>
<dbReference type="SUPFAM" id="SSF51984">
    <property type="entry name" value="MurCD N-terminal domain"/>
    <property type="match status" value="1"/>
</dbReference>
<dbReference type="SUPFAM" id="SSF53623">
    <property type="entry name" value="MurD-like peptide ligases, catalytic domain"/>
    <property type="match status" value="1"/>
</dbReference>
<dbReference type="SUPFAM" id="SSF53244">
    <property type="entry name" value="MurD-like peptide ligases, peptide-binding domain"/>
    <property type="match status" value="1"/>
</dbReference>
<keyword id="KW-0067">ATP-binding</keyword>
<keyword id="KW-0131">Cell cycle</keyword>
<keyword id="KW-0132">Cell division</keyword>
<keyword id="KW-0133">Cell shape</keyword>
<keyword id="KW-0961">Cell wall biogenesis/degradation</keyword>
<keyword id="KW-0963">Cytoplasm</keyword>
<keyword id="KW-0436">Ligase</keyword>
<keyword id="KW-0547">Nucleotide-binding</keyword>
<keyword id="KW-0573">Peptidoglycan synthesis</keyword>
<evidence type="ECO:0000255" key="1">
    <source>
        <dbReference type="HAMAP-Rule" id="MF_00639"/>
    </source>
</evidence>